<accession>O70445</accession>
<accession>A2VCQ1</accession>
<dbReference type="EC" id="2.3.2.27" evidence="2"/>
<dbReference type="EMBL" id="AF057157">
    <property type="protein sequence ID" value="AAC18095.1"/>
    <property type="molecule type" value="mRNA"/>
</dbReference>
<dbReference type="EMBL" id="BC128370">
    <property type="protein sequence ID" value="AAI28371.1"/>
    <property type="molecule type" value="mRNA"/>
</dbReference>
<dbReference type="EMBL" id="BC128371">
    <property type="protein sequence ID" value="AAI28372.1"/>
    <property type="molecule type" value="mRNA"/>
</dbReference>
<dbReference type="CCDS" id="CCDS15029.1"/>
<dbReference type="RefSeq" id="NP_031551.1">
    <property type="nucleotide sequence ID" value="NM_007525.3"/>
</dbReference>
<dbReference type="SMR" id="O70445"/>
<dbReference type="BioGRID" id="198301">
    <property type="interactions" value="4"/>
</dbReference>
<dbReference type="ComplexPortal" id="CPX-4701">
    <property type="entry name" value="BRCA1-BARD1 complex"/>
</dbReference>
<dbReference type="ComplexPortal" id="CPX-972">
    <property type="entry name" value="BRCC ubiquitin ligase complex"/>
</dbReference>
<dbReference type="FunCoup" id="O70445">
    <property type="interactions" value="2222"/>
</dbReference>
<dbReference type="IntAct" id="O70445">
    <property type="interactions" value="5"/>
</dbReference>
<dbReference type="STRING" id="10090.ENSMUSP00000027393"/>
<dbReference type="GlyGen" id="O70445">
    <property type="glycosylation" value="1 site, 1 O-linked glycan (1 site)"/>
</dbReference>
<dbReference type="iPTMnet" id="O70445"/>
<dbReference type="PhosphoSitePlus" id="O70445"/>
<dbReference type="PaxDb" id="10090-ENSMUSP00000027393"/>
<dbReference type="PeptideAtlas" id="O70445"/>
<dbReference type="ProteomicsDB" id="273437"/>
<dbReference type="Pumba" id="O70445"/>
<dbReference type="Antibodypedia" id="20039">
    <property type="antibodies" value="288 antibodies from 35 providers"/>
</dbReference>
<dbReference type="DNASU" id="12021"/>
<dbReference type="Ensembl" id="ENSMUST00000027393.8">
    <property type="protein sequence ID" value="ENSMUSP00000027393.8"/>
    <property type="gene ID" value="ENSMUSG00000026196.8"/>
</dbReference>
<dbReference type="GeneID" id="12021"/>
<dbReference type="KEGG" id="mmu:12021"/>
<dbReference type="UCSC" id="uc007bjm.2">
    <property type="organism name" value="mouse"/>
</dbReference>
<dbReference type="AGR" id="MGI:1328361"/>
<dbReference type="CTD" id="580"/>
<dbReference type="MGI" id="MGI:1328361">
    <property type="gene designation" value="Bard1"/>
</dbReference>
<dbReference type="VEuPathDB" id="HostDB:ENSMUSG00000026196"/>
<dbReference type="eggNOG" id="KOG0504">
    <property type="taxonomic scope" value="Eukaryota"/>
</dbReference>
<dbReference type="eggNOG" id="KOG4362">
    <property type="taxonomic scope" value="Eukaryota"/>
</dbReference>
<dbReference type="GeneTree" id="ENSGT00940000156532"/>
<dbReference type="HOGENOM" id="CLU_021642_0_0_1"/>
<dbReference type="InParanoid" id="O70445"/>
<dbReference type="OMA" id="LGQCEHV"/>
<dbReference type="OrthoDB" id="2384350at2759"/>
<dbReference type="PhylomeDB" id="O70445"/>
<dbReference type="TreeFam" id="TF326440"/>
<dbReference type="Reactome" id="R-MMU-5685938">
    <property type="pathway name" value="HDR through Single Strand Annealing (SSA)"/>
</dbReference>
<dbReference type="Reactome" id="R-MMU-5685942">
    <property type="pathway name" value="HDR through Homologous Recombination (HRR)"/>
</dbReference>
<dbReference type="Reactome" id="R-MMU-5689603">
    <property type="pathway name" value="UCH proteinases"/>
</dbReference>
<dbReference type="Reactome" id="R-MMU-5689901">
    <property type="pathway name" value="Metalloprotease DUBs"/>
</dbReference>
<dbReference type="Reactome" id="R-MMU-5693565">
    <property type="pathway name" value="Recruitment and ATM-mediated phosphorylation of repair and signaling proteins at DNA double strand breaks"/>
</dbReference>
<dbReference type="Reactome" id="R-MMU-5693568">
    <property type="pathway name" value="Resolution of D-loop Structures through Holliday Junction Intermediates"/>
</dbReference>
<dbReference type="Reactome" id="R-MMU-5693571">
    <property type="pathway name" value="Nonhomologous End-Joining (NHEJ)"/>
</dbReference>
<dbReference type="Reactome" id="R-MMU-5693579">
    <property type="pathway name" value="Homologous DNA Pairing and Strand Exchange"/>
</dbReference>
<dbReference type="Reactome" id="R-MMU-5693607">
    <property type="pathway name" value="Processing of DNA double-strand break ends"/>
</dbReference>
<dbReference type="Reactome" id="R-MMU-5693616">
    <property type="pathway name" value="Presynaptic phase of homologous DNA pairing and strand exchange"/>
</dbReference>
<dbReference type="Reactome" id="R-MMU-6804756">
    <property type="pathway name" value="Regulation of TP53 Activity through Phosphorylation"/>
</dbReference>
<dbReference type="Reactome" id="R-MMU-69473">
    <property type="pathway name" value="G2/M DNA damage checkpoint"/>
</dbReference>
<dbReference type="UniPathway" id="UPA00143"/>
<dbReference type="BioGRID-ORCS" id="12021">
    <property type="hits" value="27 hits in 119 CRISPR screens"/>
</dbReference>
<dbReference type="ChiTaRS" id="Bard1">
    <property type="organism name" value="mouse"/>
</dbReference>
<dbReference type="PRO" id="PR:O70445"/>
<dbReference type="Proteomes" id="UP000000589">
    <property type="component" value="Chromosome 1"/>
</dbReference>
<dbReference type="RNAct" id="O70445">
    <property type="molecule type" value="protein"/>
</dbReference>
<dbReference type="Bgee" id="ENSMUSG00000026196">
    <property type="expression patterns" value="Expressed in ureteric bud trunk and 77 other cell types or tissues"/>
</dbReference>
<dbReference type="GO" id="GO:0070531">
    <property type="term" value="C:BRCA1-A complex"/>
    <property type="evidence" value="ECO:0000303"/>
    <property type="project" value="ComplexPortal"/>
</dbReference>
<dbReference type="GO" id="GO:0070532">
    <property type="term" value="C:BRCA1-B complex"/>
    <property type="evidence" value="ECO:0000266"/>
    <property type="project" value="ComplexPortal"/>
</dbReference>
<dbReference type="GO" id="GO:0031436">
    <property type="term" value="C:BRCA1-BARD1 complex"/>
    <property type="evidence" value="ECO:0000250"/>
    <property type="project" value="UniProtKB"/>
</dbReference>
<dbReference type="GO" id="GO:0070533">
    <property type="term" value="C:BRCA1-C complex"/>
    <property type="evidence" value="ECO:0000266"/>
    <property type="project" value="ComplexPortal"/>
</dbReference>
<dbReference type="GO" id="GO:0005737">
    <property type="term" value="C:cytoplasm"/>
    <property type="evidence" value="ECO:0000250"/>
    <property type="project" value="UniProtKB"/>
</dbReference>
<dbReference type="GO" id="GO:0036464">
    <property type="term" value="C:cytoplasmic ribonucleoprotein granule"/>
    <property type="evidence" value="ECO:0007669"/>
    <property type="project" value="Ensembl"/>
</dbReference>
<dbReference type="GO" id="GO:0016607">
    <property type="term" value="C:nuclear speck"/>
    <property type="evidence" value="ECO:0007669"/>
    <property type="project" value="Ensembl"/>
</dbReference>
<dbReference type="GO" id="GO:0000152">
    <property type="term" value="C:nuclear ubiquitin ligase complex"/>
    <property type="evidence" value="ECO:0000266"/>
    <property type="project" value="ComplexPortal"/>
</dbReference>
<dbReference type="GO" id="GO:0005634">
    <property type="term" value="C:nucleus"/>
    <property type="evidence" value="ECO:0000314"/>
    <property type="project" value="MGI"/>
</dbReference>
<dbReference type="GO" id="GO:0046982">
    <property type="term" value="F:protein heterodimerization activity"/>
    <property type="evidence" value="ECO:0000250"/>
    <property type="project" value="UniProtKB"/>
</dbReference>
<dbReference type="GO" id="GO:0042803">
    <property type="term" value="F:protein homodimerization activity"/>
    <property type="evidence" value="ECO:0000250"/>
    <property type="project" value="UniProtKB"/>
</dbReference>
<dbReference type="GO" id="GO:0003723">
    <property type="term" value="F:RNA binding"/>
    <property type="evidence" value="ECO:0000266"/>
    <property type="project" value="MGI"/>
</dbReference>
<dbReference type="GO" id="GO:0004842">
    <property type="term" value="F:ubiquitin-protein transferase activity"/>
    <property type="evidence" value="ECO:0007669"/>
    <property type="project" value="Ensembl"/>
</dbReference>
<dbReference type="GO" id="GO:0008270">
    <property type="term" value="F:zinc ion binding"/>
    <property type="evidence" value="ECO:0007669"/>
    <property type="project" value="UniProtKB-KW"/>
</dbReference>
<dbReference type="GO" id="GO:0071479">
    <property type="term" value="P:cellular response to ionizing radiation"/>
    <property type="evidence" value="ECO:0000266"/>
    <property type="project" value="ComplexPortal"/>
</dbReference>
<dbReference type="GO" id="GO:0006974">
    <property type="term" value="P:DNA damage response"/>
    <property type="evidence" value="ECO:0000303"/>
    <property type="project" value="ComplexPortal"/>
</dbReference>
<dbReference type="GO" id="GO:0006281">
    <property type="term" value="P:DNA repair"/>
    <property type="evidence" value="ECO:0000303"/>
    <property type="project" value="ComplexPortal"/>
</dbReference>
<dbReference type="GO" id="GO:0110025">
    <property type="term" value="P:DNA strand resection involved in replication fork processing"/>
    <property type="evidence" value="ECO:0000303"/>
    <property type="project" value="ComplexPortal"/>
</dbReference>
<dbReference type="GO" id="GO:0035825">
    <property type="term" value="P:homologous recombination"/>
    <property type="evidence" value="ECO:0000303"/>
    <property type="project" value="ComplexPortal"/>
</dbReference>
<dbReference type="GO" id="GO:0044818">
    <property type="term" value="P:mitotic G2/M transition checkpoint"/>
    <property type="evidence" value="ECO:0000303"/>
    <property type="project" value="ComplexPortal"/>
</dbReference>
<dbReference type="GO" id="GO:0043066">
    <property type="term" value="P:negative regulation of apoptotic process"/>
    <property type="evidence" value="ECO:0000250"/>
    <property type="project" value="UniProtKB"/>
</dbReference>
<dbReference type="GO" id="GO:0046826">
    <property type="term" value="P:negative regulation of protein export from nucleus"/>
    <property type="evidence" value="ECO:0000250"/>
    <property type="project" value="UniProtKB"/>
</dbReference>
<dbReference type="GO" id="GO:0043065">
    <property type="term" value="P:positive regulation of apoptotic process"/>
    <property type="evidence" value="ECO:0000250"/>
    <property type="project" value="UniProtKB"/>
</dbReference>
<dbReference type="GO" id="GO:0045787">
    <property type="term" value="P:positive regulation of cell cycle"/>
    <property type="evidence" value="ECO:0000303"/>
    <property type="project" value="ComplexPortal"/>
</dbReference>
<dbReference type="GO" id="GO:0085020">
    <property type="term" value="P:protein K6-linked ubiquitination"/>
    <property type="evidence" value="ECO:0000250"/>
    <property type="project" value="UniProtKB"/>
</dbReference>
<dbReference type="GO" id="GO:2000001">
    <property type="term" value="P:regulation of DNA damage checkpoint"/>
    <property type="evidence" value="ECO:0000303"/>
    <property type="project" value="ComplexPortal"/>
</dbReference>
<dbReference type="GO" id="GO:0006282">
    <property type="term" value="P:regulation of DNA repair"/>
    <property type="evidence" value="ECO:0000303"/>
    <property type="project" value="ComplexPortal"/>
</dbReference>
<dbReference type="GO" id="GO:0042325">
    <property type="term" value="P:regulation of phosphorylation"/>
    <property type="evidence" value="ECO:0000250"/>
    <property type="project" value="UniProtKB"/>
</dbReference>
<dbReference type="CDD" id="cd17734">
    <property type="entry name" value="BRCT_Bard1_rpt1"/>
    <property type="match status" value="1"/>
</dbReference>
<dbReference type="CDD" id="cd17720">
    <property type="entry name" value="BRCT_Bard1_rpt2"/>
    <property type="match status" value="1"/>
</dbReference>
<dbReference type="CDD" id="cd16496">
    <property type="entry name" value="RING-HC_BARD1"/>
    <property type="match status" value="1"/>
</dbReference>
<dbReference type="FunFam" id="1.25.40.20:FF:000032">
    <property type="entry name" value="BCL-6 corepressor isoform X1"/>
    <property type="match status" value="1"/>
</dbReference>
<dbReference type="FunFam" id="3.40.50.10190:FF:000019">
    <property type="entry name" value="BRCA1 associated RING domain 1"/>
    <property type="match status" value="1"/>
</dbReference>
<dbReference type="Gene3D" id="1.25.40.20">
    <property type="entry name" value="Ankyrin repeat-containing domain"/>
    <property type="match status" value="1"/>
</dbReference>
<dbReference type="Gene3D" id="3.40.50.10190">
    <property type="entry name" value="BRCT domain"/>
    <property type="match status" value="2"/>
</dbReference>
<dbReference type="Gene3D" id="3.30.40.10">
    <property type="entry name" value="Zinc/RING finger domain, C3HC4 (zinc finger)"/>
    <property type="match status" value="1"/>
</dbReference>
<dbReference type="InterPro" id="IPR002110">
    <property type="entry name" value="Ankyrin_rpt"/>
</dbReference>
<dbReference type="InterPro" id="IPR036770">
    <property type="entry name" value="Ankyrin_rpt-contain_sf"/>
</dbReference>
<dbReference type="InterPro" id="IPR039503">
    <property type="entry name" value="BARD1_Znf-RING"/>
</dbReference>
<dbReference type="InterPro" id="IPR001357">
    <property type="entry name" value="BRCT_dom"/>
</dbReference>
<dbReference type="InterPro" id="IPR036420">
    <property type="entry name" value="BRCT_dom_sf"/>
</dbReference>
<dbReference type="InterPro" id="IPR001841">
    <property type="entry name" value="Znf_RING"/>
</dbReference>
<dbReference type="InterPro" id="IPR013083">
    <property type="entry name" value="Znf_RING/FYVE/PHD"/>
</dbReference>
<dbReference type="InterPro" id="IPR017907">
    <property type="entry name" value="Znf_RING_CS"/>
</dbReference>
<dbReference type="PANTHER" id="PTHR24171">
    <property type="entry name" value="ANKYRIN REPEAT DOMAIN-CONTAINING PROTEIN 39-RELATED"/>
    <property type="match status" value="1"/>
</dbReference>
<dbReference type="PANTHER" id="PTHR24171:SF8">
    <property type="entry name" value="BRCA1-ASSOCIATED RING DOMAIN PROTEIN 1"/>
    <property type="match status" value="1"/>
</dbReference>
<dbReference type="Pfam" id="PF12796">
    <property type="entry name" value="Ank_2"/>
    <property type="match status" value="1"/>
</dbReference>
<dbReference type="Pfam" id="PF14835">
    <property type="entry name" value="zf-RING_6"/>
    <property type="match status" value="1"/>
</dbReference>
<dbReference type="PRINTS" id="PR01415">
    <property type="entry name" value="ANKYRIN"/>
</dbReference>
<dbReference type="SMART" id="SM00248">
    <property type="entry name" value="ANK"/>
    <property type="match status" value="3"/>
</dbReference>
<dbReference type="SMART" id="SM00292">
    <property type="entry name" value="BRCT"/>
    <property type="match status" value="2"/>
</dbReference>
<dbReference type="SUPFAM" id="SSF48403">
    <property type="entry name" value="Ankyrin repeat"/>
    <property type="match status" value="1"/>
</dbReference>
<dbReference type="SUPFAM" id="SSF52113">
    <property type="entry name" value="BRCT domain"/>
    <property type="match status" value="2"/>
</dbReference>
<dbReference type="SUPFAM" id="SSF57850">
    <property type="entry name" value="RING/U-box"/>
    <property type="match status" value="1"/>
</dbReference>
<dbReference type="PROSITE" id="PS50297">
    <property type="entry name" value="ANK_REP_REGION"/>
    <property type="match status" value="1"/>
</dbReference>
<dbReference type="PROSITE" id="PS50088">
    <property type="entry name" value="ANK_REPEAT"/>
    <property type="match status" value="3"/>
</dbReference>
<dbReference type="PROSITE" id="PS50172">
    <property type="entry name" value="BRCT"/>
    <property type="match status" value="2"/>
</dbReference>
<dbReference type="PROSITE" id="PS00518">
    <property type="entry name" value="ZF_RING_1"/>
    <property type="match status" value="1"/>
</dbReference>
<dbReference type="PROSITE" id="PS50089">
    <property type="entry name" value="ZF_RING_2"/>
    <property type="match status" value="1"/>
</dbReference>
<evidence type="ECO:0000250" key="1"/>
<evidence type="ECO:0000250" key="2">
    <source>
        <dbReference type="UniProtKB" id="Q99728"/>
    </source>
</evidence>
<evidence type="ECO:0000255" key="3">
    <source>
        <dbReference type="PROSITE-ProRule" id="PRU00033"/>
    </source>
</evidence>
<evidence type="ECO:0000255" key="4">
    <source>
        <dbReference type="PROSITE-ProRule" id="PRU00175"/>
    </source>
</evidence>
<evidence type="ECO:0000256" key="5">
    <source>
        <dbReference type="SAM" id="MobiDB-lite"/>
    </source>
</evidence>
<evidence type="ECO:0000269" key="6">
    <source>
    </source>
</evidence>
<evidence type="ECO:0000305" key="7"/>
<reference key="1">
    <citation type="journal article" date="1998" name="Oncogene">
        <title>Conservation of function and primary structure in the BRCA1-associated RING domain (BARD1) protein.</title>
        <authorList>
            <person name="Ayi T.-C."/>
            <person name="Tsan J.T."/>
            <person name="Hwang L.-Y."/>
            <person name="Bowcock A.M."/>
            <person name="Baer R."/>
        </authorList>
    </citation>
    <scope>NUCLEOTIDE SEQUENCE [MRNA]</scope>
</reference>
<reference key="2">
    <citation type="journal article" date="2004" name="Genome Res.">
        <title>The status, quality, and expansion of the NIH full-length cDNA project: the Mammalian Gene Collection (MGC).</title>
        <authorList>
            <consortium name="The MGC Project Team"/>
        </authorList>
    </citation>
    <scope>NUCLEOTIDE SEQUENCE [LARGE SCALE MRNA]</scope>
</reference>
<reference key="3">
    <citation type="journal article" date="2004" name="Oncogene">
        <title>Nuclear-cytoplasmic translocation of BARD1 is linked to its apoptotic activity.</title>
        <authorList>
            <person name="Jefford C.E."/>
            <person name="Feki A."/>
            <person name="Harb J."/>
            <person name="Krause K.-H."/>
            <person name="Irminger-Finger I."/>
        </authorList>
    </citation>
    <scope>SUBCELLULAR LOCATION</scope>
</reference>
<organism>
    <name type="scientific">Mus musculus</name>
    <name type="common">Mouse</name>
    <dbReference type="NCBI Taxonomy" id="10090"/>
    <lineage>
        <taxon>Eukaryota</taxon>
        <taxon>Metazoa</taxon>
        <taxon>Chordata</taxon>
        <taxon>Craniata</taxon>
        <taxon>Vertebrata</taxon>
        <taxon>Euteleostomi</taxon>
        <taxon>Mammalia</taxon>
        <taxon>Eutheria</taxon>
        <taxon>Euarchontoglires</taxon>
        <taxon>Glires</taxon>
        <taxon>Rodentia</taxon>
        <taxon>Myomorpha</taxon>
        <taxon>Muroidea</taxon>
        <taxon>Muridae</taxon>
        <taxon>Murinae</taxon>
        <taxon>Mus</taxon>
        <taxon>Mus</taxon>
    </lineage>
</organism>
<sequence length="765" mass="84254">MPRRPPRVCSGNQPAPVPAMEPATDGLWAHSRAALARLEKLLRCSRCANILKEPVCLGGCEHIFCSGCISDCVGSGCPVCYTPAWILDLKINRQLDSMIQLSSKLQNLLHDNKDSKDNTSRASLFGDAERKKNSIKMWFSPRSKKVRYVVTKVSVQTQPQKAKDDKAQEASMYEFVSATPPVAVPKSAKTASRTSAKKHPKKSVAKINREENLRPETKDSRFDSKEELKEEKVVSCSQIPVMERPRVNGEIDLLASGSVVEPECSGSLTEVSLPLAEHIVSPDTVSKNEETPEKKVCVKDLRSGGSNGNRKGCHRPTTSTSDSCGSNIPSTSRGIGEPALLAENVVLVDCSSLPSGQLQVDVTLRRKSNASDDPLSLSPGTPPPLLNNSTHRQMMSSPSTVKLSSGMPARKRNHRGETLLHIASIKGDIPSVEYLLQNGNDPNVKDHAGWTPLHEACSHGHLKVVELLLQHNALVNTPGYQNDSPLHDAVKSGHIDIVKVLLSHGASRNAVNIFGVRPVDYTDNENIRSLLLLPEENESFSTSQCSIVNTGQRKNGPLVFIGSGLSSQQQKMLSKLETVLKAKKCMEFDSTVTHVIVPDEEAQSTLKCMLGILSGCWILKFDWVKACLDSKVREQEEKYEVPGGPQRSRLNREQLLPKLFDGCYFFLGGNFKHHPRDDLLKLIAAAGGKVLSRKPKPDSDVTQTINTVAYHAKPESDQRFCTQYIVYEDLFNCHPERVRQGKVWMAPSTWLISCIMAFELLPLDS</sequence>
<feature type="chain" id="PRO_0000055820" description="BRCA1-associated RING domain protein 1">
    <location>
        <begin position="1"/>
        <end position="765"/>
    </location>
</feature>
<feature type="repeat" description="ANK 1">
    <location>
        <begin position="415"/>
        <end position="447"/>
    </location>
</feature>
<feature type="repeat" description="ANK 2">
    <location>
        <begin position="448"/>
        <end position="480"/>
    </location>
</feature>
<feature type="repeat" description="ANK 3">
    <location>
        <begin position="481"/>
        <end position="513"/>
    </location>
</feature>
<feature type="repeat" description="ANK 4; degenerate">
    <location>
        <begin position="514"/>
        <end position="534"/>
    </location>
</feature>
<feature type="domain" description="BRCT 1" evidence="3">
    <location>
        <begin position="549"/>
        <end position="641"/>
    </location>
</feature>
<feature type="domain" description="BRCT 2" evidence="3">
    <location>
        <begin position="655"/>
        <end position="765"/>
    </location>
</feature>
<feature type="zinc finger region" description="RING-type" evidence="4">
    <location>
        <begin position="44"/>
        <end position="81"/>
    </location>
</feature>
<feature type="region of interest" description="Required for BRCA1 binding" evidence="1">
    <location>
        <begin position="20"/>
        <end position="113"/>
    </location>
</feature>
<feature type="region of interest" description="Disordered" evidence="5">
    <location>
        <begin position="183"/>
        <end position="229"/>
    </location>
</feature>
<feature type="region of interest" description="Disordered" evidence="5">
    <location>
        <begin position="299"/>
        <end position="328"/>
    </location>
</feature>
<feature type="region of interest" description="Disordered" evidence="5">
    <location>
        <begin position="369"/>
        <end position="410"/>
    </location>
</feature>
<feature type="region of interest" description="Flexible linker" evidence="1">
    <location>
        <begin position="542"/>
        <end position="546"/>
    </location>
</feature>
<feature type="compositionally biased region" description="Basic residues" evidence="5">
    <location>
        <begin position="195"/>
        <end position="204"/>
    </location>
</feature>
<feature type="compositionally biased region" description="Basic and acidic residues" evidence="5">
    <location>
        <begin position="207"/>
        <end position="229"/>
    </location>
</feature>
<feature type="compositionally biased region" description="Polar residues" evidence="5">
    <location>
        <begin position="316"/>
        <end position="328"/>
    </location>
</feature>
<feature type="compositionally biased region" description="Polar residues" evidence="5">
    <location>
        <begin position="391"/>
        <end position="403"/>
    </location>
</feature>
<feature type="modified residue" description="Phosphoserine" evidence="2">
    <location>
        <position position="378"/>
    </location>
</feature>
<feature type="modified residue" description="Phosphothreonine" evidence="2">
    <location>
        <position position="381"/>
    </location>
</feature>
<feature type="cross-link" description="Glycyl lysine isopeptide (Lys-Gly) (interchain with G-Cter in SUMO2)" evidence="2">
    <location>
        <position position="152"/>
    </location>
</feature>
<feature type="cross-link" description="Glycyl lysine isopeptide (Lys-Gly) (interchain with G-Cter in SUMO2)" evidence="2">
    <location>
        <position position="411"/>
    </location>
</feature>
<name>BARD1_MOUSE</name>
<keyword id="KW-0040">ANK repeat</keyword>
<keyword id="KW-0963">Cytoplasm</keyword>
<keyword id="KW-0227">DNA damage</keyword>
<keyword id="KW-0234">DNA repair</keyword>
<keyword id="KW-1017">Isopeptide bond</keyword>
<keyword id="KW-0479">Metal-binding</keyword>
<keyword id="KW-0539">Nucleus</keyword>
<keyword id="KW-0597">Phosphoprotein</keyword>
<keyword id="KW-1185">Reference proteome</keyword>
<keyword id="KW-0677">Repeat</keyword>
<keyword id="KW-0808">Transferase</keyword>
<keyword id="KW-0832">Ubl conjugation</keyword>
<keyword id="KW-0833">Ubl conjugation pathway</keyword>
<keyword id="KW-0862">Zinc</keyword>
<keyword id="KW-0863">Zinc-finger</keyword>
<comment type="function">
    <text evidence="2">E3 ubiquitin-protein ligase. The BRCA1-BARD1 heterodimer specifically mediates the formation of 'Lys-6'-linked polyubiquitin chains and coordinates a diverse range of cellular pathways such as DNA damage repair, ubiquitination and transcriptional regulation to maintain genomic stability. Plays a central role in the control of the cell cycle in response to DNA damage. Acts by mediating ubiquitin E3 ligase activity that is required for its tumor suppressor function. Also forms a heterodimer with CSTF1/CSTF-50 to modulate mRNA processing and RNAP II stability by inhibiting pre-mRNA 3' cleavage.</text>
</comment>
<comment type="catalytic activity">
    <reaction evidence="2">
        <text>S-ubiquitinyl-[E2 ubiquitin-conjugating enzyme]-L-cysteine + [acceptor protein]-L-lysine = [E2 ubiquitin-conjugating enzyme]-L-cysteine + N(6)-ubiquitinyl-[acceptor protein]-L-lysine.</text>
        <dbReference type="EC" id="2.3.2.27"/>
    </reaction>
</comment>
<comment type="pathway">
    <text>Protein modification; protein ubiquitination.</text>
</comment>
<comment type="subunit">
    <text evidence="2">Homo- and heterodimer. Heterodimer (RING-type zinc finger) with BRCA1. Heterodimer (via ANK repeats and BRCT domains) with CSTF1/CSTF-50. Component of the BRCA1-A complex, at least composed of the BRCA1, BARD1, UIMC1/RAP80, ABRAXAS1, BRCC3/BRCC36, BABAM2 and BABAM1/NBA1. Interacts with UBXN1.</text>
</comment>
<comment type="subcellular location">
    <subcellularLocation>
        <location evidence="6">Nucleus</location>
    </subcellularLocation>
    <subcellularLocation>
        <location evidence="6">Cytoplasm</location>
    </subcellularLocation>
    <text evidence="2">Can translocate to the cytoplasm. Localizes at sites of DNA damage at double-strand breaks (DSBs); recruitment to DNA damage sites is mediated by the BRCA1-A complex.</text>
</comment>
<comment type="PTM">
    <text evidence="2">Processed during apoptosis. The homodimer is more susceptible to proteolytic cleavage than the BARD1/BRCA1 heterodimer.</text>
</comment>
<gene>
    <name type="primary">Bard1</name>
</gene>
<proteinExistence type="evidence at transcript level"/>
<protein>
    <recommendedName>
        <fullName>BRCA1-associated RING domain protein 1</fullName>
        <shortName>BARD-1</shortName>
        <ecNumber evidence="2">2.3.2.27</ecNumber>
    </recommendedName>
    <alternativeName>
        <fullName evidence="7">RING-type E3 ubiquitin transferase BARD1</fullName>
    </alternativeName>
</protein>